<sequence length="66" mass="7788">MPKLKTRRAAAKRFRVTGSGKFMRRRAFHNHLLDHKSPKRKRYLGTMAVVDERDHDRVSHMLPYAG</sequence>
<accession>A5GQ04</accession>
<reference key="1">
    <citation type="submission" date="2006-05" db="EMBL/GenBank/DDBJ databases">
        <authorList>
            <consortium name="Genoscope"/>
        </authorList>
    </citation>
    <scope>NUCLEOTIDE SEQUENCE [LARGE SCALE GENOMIC DNA]</scope>
    <source>
        <strain>RCC307</strain>
    </source>
</reference>
<name>RL35_SYNR3</name>
<comment type="similarity">
    <text evidence="1">Belongs to the bacterial ribosomal protein bL35 family.</text>
</comment>
<proteinExistence type="inferred from homology"/>
<dbReference type="EMBL" id="CT978603">
    <property type="protein sequence ID" value="CAK26963.1"/>
    <property type="molecule type" value="Genomic_DNA"/>
</dbReference>
<dbReference type="SMR" id="A5GQ04"/>
<dbReference type="STRING" id="316278.SynRCC307_0060"/>
<dbReference type="KEGG" id="syr:SynRCC307_0060"/>
<dbReference type="eggNOG" id="COG0291">
    <property type="taxonomic scope" value="Bacteria"/>
</dbReference>
<dbReference type="HOGENOM" id="CLU_169643_4_0_3"/>
<dbReference type="OrthoDB" id="47476at2"/>
<dbReference type="Proteomes" id="UP000001115">
    <property type="component" value="Chromosome"/>
</dbReference>
<dbReference type="GO" id="GO:0022625">
    <property type="term" value="C:cytosolic large ribosomal subunit"/>
    <property type="evidence" value="ECO:0007669"/>
    <property type="project" value="TreeGrafter"/>
</dbReference>
<dbReference type="GO" id="GO:0003735">
    <property type="term" value="F:structural constituent of ribosome"/>
    <property type="evidence" value="ECO:0007669"/>
    <property type="project" value="InterPro"/>
</dbReference>
<dbReference type="GO" id="GO:0006412">
    <property type="term" value="P:translation"/>
    <property type="evidence" value="ECO:0007669"/>
    <property type="project" value="UniProtKB-UniRule"/>
</dbReference>
<dbReference type="FunFam" id="4.10.410.60:FF:000001">
    <property type="entry name" value="50S ribosomal protein L35"/>
    <property type="match status" value="1"/>
</dbReference>
<dbReference type="Gene3D" id="4.10.410.60">
    <property type="match status" value="1"/>
</dbReference>
<dbReference type="HAMAP" id="MF_00514">
    <property type="entry name" value="Ribosomal_bL35"/>
    <property type="match status" value="1"/>
</dbReference>
<dbReference type="InterPro" id="IPR001706">
    <property type="entry name" value="Ribosomal_bL35"/>
</dbReference>
<dbReference type="InterPro" id="IPR021137">
    <property type="entry name" value="Ribosomal_bL35-like"/>
</dbReference>
<dbReference type="InterPro" id="IPR018265">
    <property type="entry name" value="Ribosomal_bL35_CS"/>
</dbReference>
<dbReference type="InterPro" id="IPR037229">
    <property type="entry name" value="Ribosomal_bL35_sf"/>
</dbReference>
<dbReference type="NCBIfam" id="TIGR00001">
    <property type="entry name" value="rpmI_bact"/>
    <property type="match status" value="1"/>
</dbReference>
<dbReference type="PANTHER" id="PTHR33343">
    <property type="entry name" value="54S RIBOSOMAL PROTEIN BL35M"/>
    <property type="match status" value="1"/>
</dbReference>
<dbReference type="PANTHER" id="PTHR33343:SF1">
    <property type="entry name" value="LARGE RIBOSOMAL SUBUNIT PROTEIN BL35M"/>
    <property type="match status" value="1"/>
</dbReference>
<dbReference type="Pfam" id="PF01632">
    <property type="entry name" value="Ribosomal_L35p"/>
    <property type="match status" value="1"/>
</dbReference>
<dbReference type="PRINTS" id="PR00064">
    <property type="entry name" value="RIBOSOMALL35"/>
</dbReference>
<dbReference type="SUPFAM" id="SSF143034">
    <property type="entry name" value="L35p-like"/>
    <property type="match status" value="1"/>
</dbReference>
<dbReference type="PROSITE" id="PS00936">
    <property type="entry name" value="RIBOSOMAL_L35"/>
    <property type="match status" value="1"/>
</dbReference>
<organism>
    <name type="scientific">Synechococcus sp. (strain RCC307)</name>
    <dbReference type="NCBI Taxonomy" id="316278"/>
    <lineage>
        <taxon>Bacteria</taxon>
        <taxon>Bacillati</taxon>
        <taxon>Cyanobacteriota</taxon>
        <taxon>Cyanophyceae</taxon>
        <taxon>Synechococcales</taxon>
        <taxon>Synechococcaceae</taxon>
        <taxon>Synechococcus</taxon>
    </lineage>
</organism>
<gene>
    <name evidence="1" type="primary">rpmI</name>
    <name evidence="1" type="synonym">rpl35</name>
    <name type="ordered locus">SynRCC307_0060</name>
</gene>
<keyword id="KW-1185">Reference proteome</keyword>
<keyword id="KW-0687">Ribonucleoprotein</keyword>
<keyword id="KW-0689">Ribosomal protein</keyword>
<protein>
    <recommendedName>
        <fullName evidence="1">Large ribosomal subunit protein bL35</fullName>
    </recommendedName>
    <alternativeName>
        <fullName evidence="2">50S ribosomal protein L35</fullName>
    </alternativeName>
</protein>
<feature type="chain" id="PRO_1000050782" description="Large ribosomal subunit protein bL35">
    <location>
        <begin position="1"/>
        <end position="66"/>
    </location>
</feature>
<evidence type="ECO:0000255" key="1">
    <source>
        <dbReference type="HAMAP-Rule" id="MF_00514"/>
    </source>
</evidence>
<evidence type="ECO:0000305" key="2"/>